<comment type="function">
    <text evidence="1">Component of the large ribosomal subunit. The ribosome is a large ribonucleoprotein complex responsible for the synthesis of proteins in the cell.</text>
</comment>
<comment type="subunit">
    <text evidence="1">Component of the large ribosomal subunit.</text>
</comment>
<comment type="subcellular location">
    <subcellularLocation>
        <location evidence="1">Cytoplasm</location>
    </subcellularLocation>
</comment>
<comment type="similarity">
    <text evidence="2">Belongs to the eukaryotic ribosomal protein eL30 family.</text>
</comment>
<accession>Q3T0D5</accession>
<organism>
    <name type="scientific">Bos taurus</name>
    <name type="common">Bovine</name>
    <dbReference type="NCBI Taxonomy" id="9913"/>
    <lineage>
        <taxon>Eukaryota</taxon>
        <taxon>Metazoa</taxon>
        <taxon>Chordata</taxon>
        <taxon>Craniata</taxon>
        <taxon>Vertebrata</taxon>
        <taxon>Euteleostomi</taxon>
        <taxon>Mammalia</taxon>
        <taxon>Eutheria</taxon>
        <taxon>Laurasiatheria</taxon>
        <taxon>Artiodactyla</taxon>
        <taxon>Ruminantia</taxon>
        <taxon>Pecora</taxon>
        <taxon>Bovidae</taxon>
        <taxon>Bovinae</taxon>
        <taxon>Bos</taxon>
    </lineage>
</organism>
<proteinExistence type="inferred from homology"/>
<protein>
    <recommendedName>
        <fullName evidence="2">Large ribosomal subunit protein eL30</fullName>
    </recommendedName>
    <alternativeName>
        <fullName>60S ribosomal protein L30</fullName>
    </alternativeName>
</protein>
<feature type="chain" id="PRO_0000239838" description="Large ribosomal subunit protein eL30">
    <location>
        <begin position="1"/>
        <end position="115"/>
    </location>
</feature>
<feature type="modified residue" description="Phosphoserine" evidence="1">
    <location>
        <position position="10"/>
    </location>
</feature>
<feature type="modified residue" description="Phosphoserine" evidence="1">
    <location>
        <position position="16"/>
    </location>
</feature>
<feature type="modified residue" description="N6-acetyllysine; alternate" evidence="1">
    <location>
        <position position="26"/>
    </location>
</feature>
<feature type="cross-link" description="Glycyl lysine isopeptide (Lys-Gly) (interchain with G-Cter in SUMO2); alternate" evidence="1">
    <location>
        <position position="26"/>
    </location>
</feature>
<name>RL30_BOVIN</name>
<sequence>MVAAKKTKKSLESINSRLQLVMKSGKYVLGYKQTLKMIRQGKAKLVILANNCPALRKSEIEYYAMLAKTGVHHYSGNNIELGTACGKYYRVCTLAIIDPGDSDIIRSMPEQTGEK</sequence>
<dbReference type="EMBL" id="BC102445">
    <property type="protein sequence ID" value="AAI02446.1"/>
    <property type="molecule type" value="mRNA"/>
</dbReference>
<dbReference type="RefSeq" id="NP_001029606.1">
    <property type="nucleotide sequence ID" value="NM_001034434.2"/>
</dbReference>
<dbReference type="SMR" id="Q3T0D5"/>
<dbReference type="FunCoup" id="Q3T0D5">
    <property type="interactions" value="2969"/>
</dbReference>
<dbReference type="STRING" id="9913.ENSBTAP00000052626"/>
<dbReference type="PaxDb" id="9913-ENSBTAP00000021651"/>
<dbReference type="PeptideAtlas" id="Q3T0D5"/>
<dbReference type="Ensembl" id="ENSBTAT00000021651.7">
    <property type="protein sequence ID" value="ENSBTAP00000021651.7"/>
    <property type="gene ID" value="ENSBTAG00000016278.7"/>
</dbReference>
<dbReference type="GeneID" id="513031"/>
<dbReference type="KEGG" id="bta:513031"/>
<dbReference type="CTD" id="6156"/>
<dbReference type="VEuPathDB" id="HostDB:ENSBTAG00000016278"/>
<dbReference type="eggNOG" id="KOG2988">
    <property type="taxonomic scope" value="Eukaryota"/>
</dbReference>
<dbReference type="GeneTree" id="ENSGT00390000012138"/>
<dbReference type="HOGENOM" id="CLU_130502_0_1_1"/>
<dbReference type="InParanoid" id="Q3T0D5"/>
<dbReference type="OMA" id="YFQGGNN"/>
<dbReference type="OrthoDB" id="1928736at2759"/>
<dbReference type="TreeFam" id="TF300252"/>
<dbReference type="Reactome" id="R-BTA-156827">
    <property type="pathway name" value="L13a-mediated translational silencing of Ceruloplasmin expression"/>
</dbReference>
<dbReference type="Reactome" id="R-BTA-1799339">
    <property type="pathway name" value="SRP-dependent cotranslational protein targeting to membrane"/>
</dbReference>
<dbReference type="Reactome" id="R-BTA-6791226">
    <property type="pathway name" value="Major pathway of rRNA processing in the nucleolus and cytosol"/>
</dbReference>
<dbReference type="Reactome" id="R-BTA-72689">
    <property type="pathway name" value="Formation of a pool of free 40S subunits"/>
</dbReference>
<dbReference type="Reactome" id="R-BTA-72706">
    <property type="pathway name" value="GTP hydrolysis and joining of the 60S ribosomal subunit"/>
</dbReference>
<dbReference type="Reactome" id="R-BTA-975956">
    <property type="pathway name" value="Nonsense Mediated Decay (NMD) independent of the Exon Junction Complex (EJC)"/>
</dbReference>
<dbReference type="Reactome" id="R-BTA-975957">
    <property type="pathway name" value="Nonsense Mediated Decay (NMD) enhanced by the Exon Junction Complex (EJC)"/>
</dbReference>
<dbReference type="CD-CODE" id="D7FE2080">
    <property type="entry name" value="Nucleolus"/>
</dbReference>
<dbReference type="Proteomes" id="UP000009136">
    <property type="component" value="Chromosome 14"/>
</dbReference>
<dbReference type="Bgee" id="ENSBTAG00000016278">
    <property type="expression patterns" value="Expressed in mammary gland fat and 104 other cell types or tissues"/>
</dbReference>
<dbReference type="GO" id="GO:0022625">
    <property type="term" value="C:cytosolic large ribosomal subunit"/>
    <property type="evidence" value="ECO:0000318"/>
    <property type="project" value="GO_Central"/>
</dbReference>
<dbReference type="GO" id="GO:0003723">
    <property type="term" value="F:RNA binding"/>
    <property type="evidence" value="ECO:0000318"/>
    <property type="project" value="GO_Central"/>
</dbReference>
<dbReference type="GO" id="GO:0003735">
    <property type="term" value="F:structural constituent of ribosome"/>
    <property type="evidence" value="ECO:0000318"/>
    <property type="project" value="GO_Central"/>
</dbReference>
<dbReference type="FunFam" id="3.30.1330.30:FF:000001">
    <property type="entry name" value="60S ribosomal protein L30"/>
    <property type="match status" value="1"/>
</dbReference>
<dbReference type="Gene3D" id="3.30.1330.30">
    <property type="match status" value="1"/>
</dbReference>
<dbReference type="HAMAP" id="MF_00481">
    <property type="entry name" value="Ribosomal_eL30"/>
    <property type="match status" value="1"/>
</dbReference>
<dbReference type="InterPro" id="IPR000231">
    <property type="entry name" value="Ribosomal_eL30"/>
</dbReference>
<dbReference type="InterPro" id="IPR039109">
    <property type="entry name" value="Ribosomal_eL30-like"/>
</dbReference>
<dbReference type="InterPro" id="IPR029064">
    <property type="entry name" value="Ribosomal_eL30-like_sf"/>
</dbReference>
<dbReference type="InterPro" id="IPR022991">
    <property type="entry name" value="Ribosomal_eL30_CS"/>
</dbReference>
<dbReference type="InterPro" id="IPR004038">
    <property type="entry name" value="Ribosomal_eL8/eL30/eS12/Gad45"/>
</dbReference>
<dbReference type="NCBIfam" id="NF002172">
    <property type="entry name" value="PRK01018.1"/>
    <property type="match status" value="1"/>
</dbReference>
<dbReference type="PANTHER" id="PTHR11449">
    <property type="entry name" value="RIBOSOMAL PROTEIN L30"/>
    <property type="match status" value="1"/>
</dbReference>
<dbReference type="Pfam" id="PF01248">
    <property type="entry name" value="Ribosomal_L7Ae"/>
    <property type="match status" value="1"/>
</dbReference>
<dbReference type="SUPFAM" id="SSF55315">
    <property type="entry name" value="L30e-like"/>
    <property type="match status" value="1"/>
</dbReference>
<dbReference type="PROSITE" id="PS00709">
    <property type="entry name" value="RIBOSOMAL_L30E_1"/>
    <property type="match status" value="1"/>
</dbReference>
<dbReference type="PROSITE" id="PS00993">
    <property type="entry name" value="RIBOSOMAL_L30E_2"/>
    <property type="match status" value="1"/>
</dbReference>
<gene>
    <name type="primary">RPL30</name>
</gene>
<evidence type="ECO:0000250" key="1">
    <source>
        <dbReference type="UniProtKB" id="P62888"/>
    </source>
</evidence>
<evidence type="ECO:0000305" key="2"/>
<keyword id="KW-0007">Acetylation</keyword>
<keyword id="KW-0963">Cytoplasm</keyword>
<keyword id="KW-1017">Isopeptide bond</keyword>
<keyword id="KW-0597">Phosphoprotein</keyword>
<keyword id="KW-1185">Reference proteome</keyword>
<keyword id="KW-0687">Ribonucleoprotein</keyword>
<keyword id="KW-0689">Ribosomal protein</keyword>
<keyword id="KW-0832">Ubl conjugation</keyword>
<reference key="1">
    <citation type="submission" date="2005-08" db="EMBL/GenBank/DDBJ databases">
        <authorList>
            <consortium name="NIH - Mammalian Gene Collection (MGC) project"/>
        </authorList>
    </citation>
    <scope>NUCLEOTIDE SEQUENCE [LARGE SCALE MRNA]</scope>
    <source>
        <strain>Crossbred X Angus</strain>
        <tissue>Ileum</tissue>
    </source>
</reference>